<reference key="1">
    <citation type="journal article" date="2006" name="Appl. Environ. Microbiol.">
        <title>Genome sequence of the chemolithoautotrophic nitrite-oxidizing bacterium Nitrobacter winogradskyi Nb-255.</title>
        <authorList>
            <person name="Starkenburg S.R."/>
            <person name="Chain P.S.G."/>
            <person name="Sayavedra-Soto L.A."/>
            <person name="Hauser L."/>
            <person name="Land M.L."/>
            <person name="Larimer F.W."/>
            <person name="Malfatti S.A."/>
            <person name="Klotz M.G."/>
            <person name="Bottomley P.J."/>
            <person name="Arp D.J."/>
            <person name="Hickey W.J."/>
        </authorList>
    </citation>
    <scope>NUCLEOTIDE SEQUENCE [LARGE SCALE GENOMIC DNA]</scope>
    <source>
        <strain>ATCC 25391 / DSM 10237 / CIP 104748 / NCIMB 11846 / Nb-255</strain>
    </source>
</reference>
<proteinExistence type="inferred from homology"/>
<accession>Q3SRV4</accession>
<feature type="chain" id="PRO_0000230875" description="Transcriptional repressor NrdR">
    <location>
        <begin position="1"/>
        <end position="160"/>
    </location>
</feature>
<feature type="domain" description="ATP-cone" evidence="1">
    <location>
        <begin position="49"/>
        <end position="139"/>
    </location>
</feature>
<feature type="zinc finger region" evidence="1">
    <location>
        <begin position="3"/>
        <end position="34"/>
    </location>
</feature>
<feature type="region of interest" description="Disordered" evidence="2">
    <location>
        <begin position="1"/>
        <end position="20"/>
    </location>
</feature>
<feature type="compositionally biased region" description="Polar residues" evidence="2">
    <location>
        <begin position="1"/>
        <end position="11"/>
    </location>
</feature>
<comment type="function">
    <text evidence="1">Negatively regulates transcription of bacterial ribonucleotide reductase nrd genes and operons by binding to NrdR-boxes.</text>
</comment>
<comment type="cofactor">
    <cofactor evidence="1">
        <name>Zn(2+)</name>
        <dbReference type="ChEBI" id="CHEBI:29105"/>
    </cofactor>
    <text evidence="1">Binds 1 zinc ion.</text>
</comment>
<comment type="similarity">
    <text evidence="1">Belongs to the NrdR family.</text>
</comment>
<keyword id="KW-0067">ATP-binding</keyword>
<keyword id="KW-0238">DNA-binding</keyword>
<keyword id="KW-0479">Metal-binding</keyword>
<keyword id="KW-0547">Nucleotide-binding</keyword>
<keyword id="KW-1185">Reference proteome</keyword>
<keyword id="KW-0678">Repressor</keyword>
<keyword id="KW-0804">Transcription</keyword>
<keyword id="KW-0805">Transcription regulation</keyword>
<keyword id="KW-0862">Zinc</keyword>
<keyword id="KW-0863">Zinc-finger</keyword>
<organism>
    <name type="scientific">Nitrobacter winogradskyi (strain ATCC 25391 / DSM 10237 / CIP 104748 / NCIMB 11846 / Nb-255)</name>
    <dbReference type="NCBI Taxonomy" id="323098"/>
    <lineage>
        <taxon>Bacteria</taxon>
        <taxon>Pseudomonadati</taxon>
        <taxon>Pseudomonadota</taxon>
        <taxon>Alphaproteobacteria</taxon>
        <taxon>Hyphomicrobiales</taxon>
        <taxon>Nitrobacteraceae</taxon>
        <taxon>Nitrobacter</taxon>
    </lineage>
</organism>
<gene>
    <name evidence="1" type="primary">nrdR</name>
    <name type="ordered locus">Nwi_1726</name>
</gene>
<protein>
    <recommendedName>
        <fullName evidence="1">Transcriptional repressor NrdR</fullName>
    </recommendedName>
</protein>
<name>NRDR_NITWN</name>
<sequence length="160" mass="18619">MRCPSCNSLDTQVKDSRPTEDSAVIRRRRVCMACNFRFTTFERVQLRELTVIKRNGRRVPFDRDKLVRSLQISLRKRPVEPERIETMVSAIVRELESGGEAEISSETIGEIVMEHLRSLDDVAYVRFASVYRNFREAKDFEAVLGELSSEDDPRRVPLRK</sequence>
<dbReference type="EMBL" id="CP000115">
    <property type="protein sequence ID" value="ABA04987.1"/>
    <property type="molecule type" value="Genomic_DNA"/>
</dbReference>
<dbReference type="RefSeq" id="WP_011314983.1">
    <property type="nucleotide sequence ID" value="NC_007406.1"/>
</dbReference>
<dbReference type="SMR" id="Q3SRV4"/>
<dbReference type="STRING" id="323098.Nwi_1726"/>
<dbReference type="KEGG" id="nwi:Nwi_1726"/>
<dbReference type="eggNOG" id="COG1327">
    <property type="taxonomic scope" value="Bacteria"/>
</dbReference>
<dbReference type="HOGENOM" id="CLU_108412_0_1_5"/>
<dbReference type="OrthoDB" id="9807461at2"/>
<dbReference type="Proteomes" id="UP000002531">
    <property type="component" value="Chromosome"/>
</dbReference>
<dbReference type="GO" id="GO:0005524">
    <property type="term" value="F:ATP binding"/>
    <property type="evidence" value="ECO:0007669"/>
    <property type="project" value="UniProtKB-KW"/>
</dbReference>
<dbReference type="GO" id="GO:0003677">
    <property type="term" value="F:DNA binding"/>
    <property type="evidence" value="ECO:0007669"/>
    <property type="project" value="UniProtKB-KW"/>
</dbReference>
<dbReference type="GO" id="GO:0008270">
    <property type="term" value="F:zinc ion binding"/>
    <property type="evidence" value="ECO:0007669"/>
    <property type="project" value="UniProtKB-UniRule"/>
</dbReference>
<dbReference type="GO" id="GO:0045892">
    <property type="term" value="P:negative regulation of DNA-templated transcription"/>
    <property type="evidence" value="ECO:0007669"/>
    <property type="project" value="UniProtKB-UniRule"/>
</dbReference>
<dbReference type="HAMAP" id="MF_00440">
    <property type="entry name" value="NrdR"/>
    <property type="match status" value="1"/>
</dbReference>
<dbReference type="InterPro" id="IPR005144">
    <property type="entry name" value="ATP-cone_dom"/>
</dbReference>
<dbReference type="InterPro" id="IPR055173">
    <property type="entry name" value="NrdR-like_N"/>
</dbReference>
<dbReference type="InterPro" id="IPR003796">
    <property type="entry name" value="RNR_NrdR-like"/>
</dbReference>
<dbReference type="NCBIfam" id="TIGR00244">
    <property type="entry name" value="transcriptional regulator NrdR"/>
    <property type="match status" value="1"/>
</dbReference>
<dbReference type="PANTHER" id="PTHR30455">
    <property type="entry name" value="TRANSCRIPTIONAL REPRESSOR NRDR"/>
    <property type="match status" value="1"/>
</dbReference>
<dbReference type="PANTHER" id="PTHR30455:SF2">
    <property type="entry name" value="TRANSCRIPTIONAL REPRESSOR NRDR"/>
    <property type="match status" value="1"/>
</dbReference>
<dbReference type="Pfam" id="PF03477">
    <property type="entry name" value="ATP-cone"/>
    <property type="match status" value="1"/>
</dbReference>
<dbReference type="Pfam" id="PF22811">
    <property type="entry name" value="Zn_ribbon_NrdR"/>
    <property type="match status" value="1"/>
</dbReference>
<dbReference type="PROSITE" id="PS51161">
    <property type="entry name" value="ATP_CONE"/>
    <property type="match status" value="1"/>
</dbReference>
<evidence type="ECO:0000255" key="1">
    <source>
        <dbReference type="HAMAP-Rule" id="MF_00440"/>
    </source>
</evidence>
<evidence type="ECO:0000256" key="2">
    <source>
        <dbReference type="SAM" id="MobiDB-lite"/>
    </source>
</evidence>